<protein>
    <recommendedName>
        <fullName evidence="1">Error-prone DNA polymerase 2</fullName>
        <ecNumber evidence="1">2.7.7.7</ecNumber>
    </recommendedName>
</protein>
<organism>
    <name type="scientific">Agrobacterium fabrum (strain C58 / ATCC 33970)</name>
    <name type="common">Agrobacterium tumefaciens (strain C58)</name>
    <dbReference type="NCBI Taxonomy" id="176299"/>
    <lineage>
        <taxon>Bacteria</taxon>
        <taxon>Pseudomonadati</taxon>
        <taxon>Pseudomonadota</taxon>
        <taxon>Alphaproteobacteria</taxon>
        <taxon>Hyphomicrobiales</taxon>
        <taxon>Rhizobiaceae</taxon>
        <taxon>Rhizobium/Agrobacterium group</taxon>
        <taxon>Agrobacterium</taxon>
        <taxon>Agrobacterium tumefaciens complex</taxon>
    </lineage>
</organism>
<sequence length="1085" mass="121645">MSYAELQVTTHFSFLRGASSAQELFETAKALGIQAIGVVDRNSLAGIVRALEASRATDIRLVVGCRLDLTDGMSLLVYPTDRAAYSRLTRLITLGKSRGGKNNCILHWDDVIAYSRGMIGVLVPDLPDATCAAQLRRIAEAFGDRAYVSLCLRRRQNDQMRLHEISNLAARFKVKTVVTNDVLFHEPGRRQLQDIVTCIRHNTTIDDVGFERERHADRYLKPPEEMERLFSRYSEALARTLEIVRRCKFSLEELTYQYPEEAIVPGKDAQASLEHYVWECAPDRYPEGLPQDVLKTVRHELDLIRTMKYAPYFLTVFSIVRFARSQGILCQGRGSAANSAVCYILGITSIDPSTNDLLFERFVSQERDEPPDIDVDFEHERREEVIQWIYKTYTKDKAALCATVTRYRAKGAIRDVGKALGLPEDVIKALSSGMWSWSEEVPDRNIRELNLNPDDRRLALTLKLAQQLMGAPRHLGQHPGGFVLTHDRLDDLVPIEPATMKDRQIIEWDKDDVEALKFMKVDVLALGMLTCMAKAFDLIREHKGQQLDLSNIEQEDAATYAMIRKADTLGTFQIESRAQMAMLPRLKPRTFYDLVVQVAIVRPGPIQGDMVHPYLRRREGKEPVEYPTPELEAVLGKTLGVPLFQESAMRVAMVCAGFTGGEADQLRKSMATFKFTGGVSRFKDKLVSGMVKNGYSPEFAEKTFSQLEGFGSYGFPESHAASFALIAYASNYIKCHYPDVFCAALLNSQPMGFYAPAQIVGDAIKHGVEVRPVCVNRSRWDCTLERIEGSDRHAVRLGFRQVKGLAVADAARIVAARMNNPFASVDDMWRRSSVPTEALVQLAEADAFLPSLKLERRDALWAIKALRDEPLPLFAAAAEREATAIAEQQEPEVALRQMTDGHNVIEDYSHTGLTLRQHPVAFLRRDLSARNIIPCAEAMNARDGRWVYTAGLVLVRQKPGSAKGVMFITIEDETGPANIVVWPSLFEKRRSVVLGSSMMAINGRIQREGEVVHLVAQQLFDLSADLVGLADRDTGFRLPAGRGDEFAHGGGGPDSRDRQKPVVPRDMFTPDLHIDTLKIKSRNFQ</sequence>
<comment type="function">
    <text evidence="1">DNA polymerase involved in damage-induced mutagenesis and translesion synthesis (TLS). It is not the major replicative DNA polymerase.</text>
</comment>
<comment type="catalytic activity">
    <reaction evidence="1">
        <text>DNA(n) + a 2'-deoxyribonucleoside 5'-triphosphate = DNA(n+1) + diphosphate</text>
        <dbReference type="Rhea" id="RHEA:22508"/>
        <dbReference type="Rhea" id="RHEA-COMP:17339"/>
        <dbReference type="Rhea" id="RHEA-COMP:17340"/>
        <dbReference type="ChEBI" id="CHEBI:33019"/>
        <dbReference type="ChEBI" id="CHEBI:61560"/>
        <dbReference type="ChEBI" id="CHEBI:173112"/>
        <dbReference type="EC" id="2.7.7.7"/>
    </reaction>
</comment>
<comment type="subcellular location">
    <subcellularLocation>
        <location evidence="1">Cytoplasm</location>
    </subcellularLocation>
</comment>
<comment type="similarity">
    <text evidence="1">Belongs to the DNA polymerase type-C family. DnaE2 subfamily.</text>
</comment>
<feature type="chain" id="PRO_0000103363" description="Error-prone DNA polymerase 2">
    <location>
        <begin position="1"/>
        <end position="1085"/>
    </location>
</feature>
<feature type="region of interest" description="Disordered" evidence="2">
    <location>
        <begin position="1040"/>
        <end position="1066"/>
    </location>
</feature>
<evidence type="ECO:0000255" key="1">
    <source>
        <dbReference type="HAMAP-Rule" id="MF_01902"/>
    </source>
</evidence>
<evidence type="ECO:0000256" key="2">
    <source>
        <dbReference type="SAM" id="MobiDB-lite"/>
    </source>
</evidence>
<dbReference type="EC" id="2.7.7.7" evidence="1"/>
<dbReference type="EMBL" id="AE007872">
    <property type="protein sequence ID" value="AAK90476.1"/>
    <property type="molecule type" value="Genomic_DNA"/>
</dbReference>
<dbReference type="PIR" id="AH3171">
    <property type="entry name" value="AH3171"/>
</dbReference>
<dbReference type="RefSeq" id="NP_396035.1">
    <property type="nucleotide sequence ID" value="NC_003064.2"/>
</dbReference>
<dbReference type="RefSeq" id="WP_010974364.1">
    <property type="nucleotide sequence ID" value="NC_003064.2"/>
</dbReference>
<dbReference type="SMR" id="Q8UKK2"/>
<dbReference type="EnsemblBacteria" id="AAK90476">
    <property type="protein sequence ID" value="AAK90476"/>
    <property type="gene ID" value="Atu5100"/>
</dbReference>
<dbReference type="GeneID" id="1136873"/>
<dbReference type="KEGG" id="atu:Atu5100"/>
<dbReference type="PATRIC" id="fig|176299.10.peg.4793"/>
<dbReference type="eggNOG" id="COG0587">
    <property type="taxonomic scope" value="Bacteria"/>
</dbReference>
<dbReference type="HOGENOM" id="CLU_001600_4_0_5"/>
<dbReference type="OrthoDB" id="9803237at2"/>
<dbReference type="PhylomeDB" id="Q8UKK2"/>
<dbReference type="BioCyc" id="AGRO:ATU5100-MONOMER"/>
<dbReference type="Proteomes" id="UP000000813">
    <property type="component" value="Plasmid At"/>
</dbReference>
<dbReference type="GO" id="GO:0005737">
    <property type="term" value="C:cytoplasm"/>
    <property type="evidence" value="ECO:0007669"/>
    <property type="project" value="UniProtKB-SubCell"/>
</dbReference>
<dbReference type="GO" id="GO:0008408">
    <property type="term" value="F:3'-5' exonuclease activity"/>
    <property type="evidence" value="ECO:0007669"/>
    <property type="project" value="InterPro"/>
</dbReference>
<dbReference type="GO" id="GO:0003887">
    <property type="term" value="F:DNA-directed DNA polymerase activity"/>
    <property type="evidence" value="ECO:0007669"/>
    <property type="project" value="UniProtKB-UniRule"/>
</dbReference>
<dbReference type="GO" id="GO:0003676">
    <property type="term" value="F:nucleic acid binding"/>
    <property type="evidence" value="ECO:0007669"/>
    <property type="project" value="InterPro"/>
</dbReference>
<dbReference type="GO" id="GO:0006281">
    <property type="term" value="P:DNA repair"/>
    <property type="evidence" value="ECO:0007669"/>
    <property type="project" value="UniProtKB-UniRule"/>
</dbReference>
<dbReference type="GO" id="GO:0006260">
    <property type="term" value="P:DNA replication"/>
    <property type="evidence" value="ECO:0007669"/>
    <property type="project" value="UniProtKB-KW"/>
</dbReference>
<dbReference type="CDD" id="cd04485">
    <property type="entry name" value="DnaE_OBF"/>
    <property type="match status" value="1"/>
</dbReference>
<dbReference type="CDD" id="cd07434">
    <property type="entry name" value="PHP_PolIIIA_DnaE2"/>
    <property type="match status" value="1"/>
</dbReference>
<dbReference type="FunFam" id="1.10.150.870:FF:000002">
    <property type="entry name" value="Error-prone DNA polymerase"/>
    <property type="match status" value="1"/>
</dbReference>
<dbReference type="Gene3D" id="1.10.150.870">
    <property type="match status" value="1"/>
</dbReference>
<dbReference type="Gene3D" id="3.20.20.140">
    <property type="entry name" value="Metal-dependent hydrolases"/>
    <property type="match status" value="1"/>
</dbReference>
<dbReference type="HAMAP" id="MF_01902">
    <property type="entry name" value="DNApol_error_prone"/>
    <property type="match status" value="1"/>
</dbReference>
<dbReference type="InterPro" id="IPR011708">
    <property type="entry name" value="DNA_pol3_alpha_NTPase_dom"/>
</dbReference>
<dbReference type="InterPro" id="IPR040982">
    <property type="entry name" value="DNA_pol3_finger"/>
</dbReference>
<dbReference type="InterPro" id="IPR023073">
    <property type="entry name" value="DnaE2"/>
</dbReference>
<dbReference type="InterPro" id="IPR004805">
    <property type="entry name" value="DnaE2/DnaE/PolC"/>
</dbReference>
<dbReference type="InterPro" id="IPR029460">
    <property type="entry name" value="DNAPol_HHH"/>
</dbReference>
<dbReference type="InterPro" id="IPR004365">
    <property type="entry name" value="NA-bd_OB_tRNA"/>
</dbReference>
<dbReference type="InterPro" id="IPR004013">
    <property type="entry name" value="PHP_dom"/>
</dbReference>
<dbReference type="InterPro" id="IPR003141">
    <property type="entry name" value="Pol/His_phosphatase_N"/>
</dbReference>
<dbReference type="InterPro" id="IPR016195">
    <property type="entry name" value="Pol/histidinol_Pase-like"/>
</dbReference>
<dbReference type="NCBIfam" id="TIGR00594">
    <property type="entry name" value="polc"/>
    <property type="match status" value="1"/>
</dbReference>
<dbReference type="NCBIfam" id="NF004225">
    <property type="entry name" value="PRK05672.1"/>
    <property type="match status" value="1"/>
</dbReference>
<dbReference type="PANTHER" id="PTHR32294">
    <property type="entry name" value="DNA POLYMERASE III SUBUNIT ALPHA"/>
    <property type="match status" value="1"/>
</dbReference>
<dbReference type="PANTHER" id="PTHR32294:SF4">
    <property type="entry name" value="ERROR-PRONE DNA POLYMERASE"/>
    <property type="match status" value="1"/>
</dbReference>
<dbReference type="Pfam" id="PF07733">
    <property type="entry name" value="DNA_pol3_alpha"/>
    <property type="match status" value="1"/>
</dbReference>
<dbReference type="Pfam" id="PF17657">
    <property type="entry name" value="DNA_pol3_finger"/>
    <property type="match status" value="1"/>
</dbReference>
<dbReference type="Pfam" id="PF14579">
    <property type="entry name" value="HHH_6"/>
    <property type="match status" value="1"/>
</dbReference>
<dbReference type="Pfam" id="PF02811">
    <property type="entry name" value="PHP"/>
    <property type="match status" value="1"/>
</dbReference>
<dbReference type="Pfam" id="PF01336">
    <property type="entry name" value="tRNA_anti-codon"/>
    <property type="match status" value="1"/>
</dbReference>
<dbReference type="SMART" id="SM00481">
    <property type="entry name" value="POLIIIAc"/>
    <property type="match status" value="1"/>
</dbReference>
<dbReference type="SUPFAM" id="SSF89550">
    <property type="entry name" value="PHP domain-like"/>
    <property type="match status" value="1"/>
</dbReference>
<gene>
    <name evidence="1" type="primary">dnaE2-2</name>
    <name type="ordered locus">Atu5100</name>
    <name type="ORF">AGR_pAT_bx5</name>
</gene>
<proteinExistence type="inferred from homology"/>
<accession>Q8UKK2</accession>
<accession>Q7D3X1</accession>
<keyword id="KW-0963">Cytoplasm</keyword>
<keyword id="KW-0227">DNA damage</keyword>
<keyword id="KW-0234">DNA repair</keyword>
<keyword id="KW-0235">DNA replication</keyword>
<keyword id="KW-0239">DNA-directed DNA polymerase</keyword>
<keyword id="KW-0548">Nucleotidyltransferase</keyword>
<keyword id="KW-0614">Plasmid</keyword>
<keyword id="KW-1185">Reference proteome</keyword>
<keyword id="KW-0808">Transferase</keyword>
<geneLocation type="plasmid">
    <name>AT</name>
</geneLocation>
<name>DNE22_AGRFC</name>
<reference key="1">
    <citation type="journal article" date="2001" name="Science">
        <title>The genome of the natural genetic engineer Agrobacterium tumefaciens C58.</title>
        <authorList>
            <person name="Wood D.W."/>
            <person name="Setubal J.C."/>
            <person name="Kaul R."/>
            <person name="Monks D.E."/>
            <person name="Kitajima J.P."/>
            <person name="Okura V.K."/>
            <person name="Zhou Y."/>
            <person name="Chen L."/>
            <person name="Wood G.E."/>
            <person name="Almeida N.F. Jr."/>
            <person name="Woo L."/>
            <person name="Chen Y."/>
            <person name="Paulsen I.T."/>
            <person name="Eisen J.A."/>
            <person name="Karp P.D."/>
            <person name="Bovee D. Sr."/>
            <person name="Chapman P."/>
            <person name="Clendenning J."/>
            <person name="Deatherage G."/>
            <person name="Gillet W."/>
            <person name="Grant C."/>
            <person name="Kutyavin T."/>
            <person name="Levy R."/>
            <person name="Li M.-J."/>
            <person name="McClelland E."/>
            <person name="Palmieri A."/>
            <person name="Raymond C."/>
            <person name="Rouse G."/>
            <person name="Saenphimmachak C."/>
            <person name="Wu Z."/>
            <person name="Romero P."/>
            <person name="Gordon D."/>
            <person name="Zhang S."/>
            <person name="Yoo H."/>
            <person name="Tao Y."/>
            <person name="Biddle P."/>
            <person name="Jung M."/>
            <person name="Krespan W."/>
            <person name="Perry M."/>
            <person name="Gordon-Kamm B."/>
            <person name="Liao L."/>
            <person name="Kim S."/>
            <person name="Hendrick C."/>
            <person name="Zhao Z.-Y."/>
            <person name="Dolan M."/>
            <person name="Chumley F."/>
            <person name="Tingey S.V."/>
            <person name="Tomb J.-F."/>
            <person name="Gordon M.P."/>
            <person name="Olson M.V."/>
            <person name="Nester E.W."/>
        </authorList>
    </citation>
    <scope>NUCLEOTIDE SEQUENCE [LARGE SCALE GENOMIC DNA]</scope>
</reference>
<reference key="2">
    <citation type="journal article" date="2001" name="Science">
        <title>Genome sequence of the plant pathogen and biotechnology agent Agrobacterium tumefaciens C58.</title>
        <authorList>
            <person name="Goodner B."/>
            <person name="Hinkle G."/>
            <person name="Gattung S."/>
            <person name="Miller N."/>
            <person name="Blanchard M."/>
            <person name="Qurollo B."/>
            <person name="Goldman B.S."/>
            <person name="Cao Y."/>
            <person name="Askenazi M."/>
            <person name="Halling C."/>
            <person name="Mullin L."/>
            <person name="Houmiel K."/>
            <person name="Gordon J."/>
            <person name="Vaudin M."/>
            <person name="Iartchouk O."/>
            <person name="Epp A."/>
            <person name="Liu F."/>
            <person name="Wollam C."/>
            <person name="Allinger M."/>
            <person name="Doughty D."/>
            <person name="Scott C."/>
            <person name="Lappas C."/>
            <person name="Markelz B."/>
            <person name="Flanagan C."/>
            <person name="Crowell C."/>
            <person name="Gurson J."/>
            <person name="Lomo C."/>
            <person name="Sear C."/>
            <person name="Strub G."/>
            <person name="Cielo C."/>
            <person name="Slater S."/>
        </authorList>
    </citation>
    <scope>NUCLEOTIDE SEQUENCE [LARGE SCALE GENOMIC DNA]</scope>
    <source>
        <strain>C58 / ATCC 33970</strain>
    </source>
</reference>